<protein>
    <recommendedName>
        <fullName>Alpha-crystallin A chain</fullName>
    </recommendedName>
</protein>
<feature type="chain" id="PRO_0000125862" description="Alpha-crystallin A chain">
    <location>
        <begin position="1"/>
        <end position="173"/>
    </location>
</feature>
<feature type="domain" description="sHSP" evidence="5">
    <location>
        <begin position="52"/>
        <end position="162"/>
    </location>
</feature>
<feature type="region of interest" description="Required for complex formation with BFSP1 and BFSP2" evidence="4">
    <location>
        <begin position="1"/>
        <end position="63"/>
    </location>
</feature>
<feature type="region of interest" description="Disordered" evidence="6">
    <location>
        <begin position="144"/>
        <end position="173"/>
    </location>
</feature>
<feature type="compositionally biased region" description="Basic and acidic residues" evidence="6">
    <location>
        <begin position="153"/>
        <end position="167"/>
    </location>
</feature>
<feature type="binding site" evidence="2">
    <location>
        <position position="100"/>
    </location>
    <ligand>
        <name>Zn(2+)</name>
        <dbReference type="ChEBI" id="CHEBI:29105"/>
        <label>1</label>
    </ligand>
</feature>
<feature type="binding site" evidence="2">
    <location>
        <position position="102"/>
    </location>
    <ligand>
        <name>Zn(2+)</name>
        <dbReference type="ChEBI" id="CHEBI:29105"/>
        <label>1</label>
    </ligand>
</feature>
<feature type="binding site" evidence="2">
    <location>
        <position position="107"/>
    </location>
    <ligand>
        <name>Zn(2+)</name>
        <dbReference type="ChEBI" id="CHEBI:29105"/>
        <label>2</label>
    </ligand>
</feature>
<feature type="binding site" evidence="2">
    <location>
        <position position="154"/>
    </location>
    <ligand>
        <name>Zn(2+)</name>
        <dbReference type="ChEBI" id="CHEBI:29105"/>
        <label>3</label>
    </ligand>
</feature>
<feature type="modified residue" description="N-acetylmethionine" evidence="3 7">
    <location>
        <position position="1"/>
    </location>
</feature>
<feature type="modified residue" description="Deamidated glutamine; partial" evidence="1">
    <location>
        <position position="6"/>
    </location>
</feature>
<feature type="modified residue" description="Phosphoserine" evidence="4">
    <location>
        <position position="45"/>
    </location>
</feature>
<feature type="modified residue" description="Deamidated glutamine; partial" evidence="1">
    <location>
        <position position="50"/>
    </location>
</feature>
<feature type="modified residue" description="N6-acetyllysine" evidence="4">
    <location>
        <position position="70"/>
    </location>
</feature>
<feature type="modified residue" description="N6-acetyllysine" evidence="4">
    <location>
        <position position="99"/>
    </location>
</feature>
<feature type="modified residue" description="Deamidated asparagine; partial" evidence="1">
    <location>
        <position position="101"/>
    </location>
</feature>
<feature type="modified residue" description="Phosphoserine" evidence="2">
    <location>
        <position position="122"/>
    </location>
</feature>
<feature type="modified residue" description="Deamidated asparagine; partial" evidence="1">
    <location>
        <position position="123"/>
    </location>
</feature>
<feature type="glycosylation site" description="O-linked (GlcNAc) serine" evidence="1">
    <location>
        <position position="162"/>
    </location>
</feature>
<accession>P68289</accession>
<accession>P02481</accession>
<evidence type="ECO:0000250" key="1"/>
<evidence type="ECO:0000250" key="2">
    <source>
        <dbReference type="UniProtKB" id="P02470"/>
    </source>
</evidence>
<evidence type="ECO:0000250" key="3">
    <source>
        <dbReference type="UniProtKB" id="P02474"/>
    </source>
</evidence>
<evidence type="ECO:0000250" key="4">
    <source>
        <dbReference type="UniProtKB" id="P02489"/>
    </source>
</evidence>
<evidence type="ECO:0000255" key="5">
    <source>
        <dbReference type="PROSITE-ProRule" id="PRU00285"/>
    </source>
</evidence>
<evidence type="ECO:0000256" key="6">
    <source>
        <dbReference type="SAM" id="MobiDB-lite"/>
    </source>
</evidence>
<evidence type="ECO:0000305" key="7"/>
<keyword id="KW-0007">Acetylation</keyword>
<keyword id="KW-0143">Chaperone</keyword>
<keyword id="KW-0963">Cytoplasm</keyword>
<keyword id="KW-0903">Direct protein sequencing</keyword>
<keyword id="KW-0273">Eye lens protein</keyword>
<keyword id="KW-0325">Glycoprotein</keyword>
<keyword id="KW-0479">Metal-binding</keyword>
<keyword id="KW-0488">Methylation</keyword>
<keyword id="KW-0539">Nucleus</keyword>
<keyword id="KW-0597">Phosphoprotein</keyword>
<keyword id="KW-0862">Zinc</keyword>
<reference key="1">
    <citation type="book" date="1980" name="Protides of the biological fluids, Proc. 28th colloquium">
        <title>Trends in the molecular evolution of alpha-crystallin.</title>
        <editorList>
            <person name="Peeters H."/>
        </editorList>
        <authorList>
            <person name="de Jong W.W."/>
            <person name="Zweers A."/>
            <person name="Goodman M."/>
        </authorList>
    </citation>
    <scope>PROTEIN SEQUENCE</scope>
</reference>
<gene>
    <name type="primary">CRYAA</name>
</gene>
<comment type="function">
    <text evidence="4">Contributes to the transparency and refractive index of the lens. Acts as a chaperone, preventing aggregation of various proteins under a wide range of stress conditions. Required for the correct formation of lens intermediate filaments as part of a complex composed of BFSP1, BFSP2 and CRYAA.</text>
</comment>
<comment type="subunit">
    <text evidence="2 4">Heteromer composed of three CRYAA and one CRYAB subunits. Inter-subunit bridging via zinc ions enhances stability, which is crucial as there is no protein turn over in the lens. Can also form homodimers and homotetramers (dimers of dimers) which serve as the building blocks of homooligomers (By similarity). Within homooligomers, the zinc-binding motif is created from residues of 3 different molecules. His-100 and Glu-102 from one molecule are ligands of the zinc ion, and His-107 and His-154 residues from additional molecules complete the site with tetrahedral coordination geometry (By similarity). Part of a complex required for lens intermediate filament formation composed of BFSP1, BFSP2 and CRYAA (By similarity).</text>
</comment>
<comment type="subcellular location">
    <subcellularLocation>
        <location evidence="4">Cytoplasm</location>
    </subcellularLocation>
    <subcellularLocation>
        <location evidence="4">Nucleus</location>
    </subcellularLocation>
    <text evidence="4">Translocates to the nucleus during heat shock and resides in sub-nuclear structures known as SC35 speckles or nuclear splicing speckles.</text>
</comment>
<comment type="PTM">
    <text evidence="4">Acetylation at Lys-70 may increase chaperone activity.</text>
</comment>
<comment type="PTM">
    <text evidence="4">Undergoes age-dependent proteolytical cleavage at the C-terminus.</text>
</comment>
<comment type="similarity">
    <text evidence="5">Belongs to the small heat shock protein (HSP20) family.</text>
</comment>
<organism>
    <name type="scientific">Halichoerus grypus</name>
    <name type="common">Gray seal</name>
    <name type="synonym">Phoca grypus</name>
    <dbReference type="NCBI Taxonomy" id="9711"/>
    <lineage>
        <taxon>Eukaryota</taxon>
        <taxon>Metazoa</taxon>
        <taxon>Chordata</taxon>
        <taxon>Craniata</taxon>
        <taxon>Vertebrata</taxon>
        <taxon>Euteleostomi</taxon>
        <taxon>Mammalia</taxon>
        <taxon>Eutheria</taxon>
        <taxon>Laurasiatheria</taxon>
        <taxon>Carnivora</taxon>
        <taxon>Caniformia</taxon>
        <taxon>Pinnipedia</taxon>
        <taxon>Phocidae</taxon>
        <taxon>Phocinae</taxon>
        <taxon>Halichoerus</taxon>
    </lineage>
</organism>
<name>CRYAA_HALGR</name>
<proteinExistence type="evidence at protein level"/>
<sequence>MDIAIQHPWFKRALGPFYPSRLFDQFFGEGLFEYDLLPFLSSTISPYYRQPVFRSVLDSGISEVRSDRDKFVIFLDVKHFSPEDLTVKVLEDFVEIHGKHNERQDDHGYISREFHRRYRLPSNVDQSALSCSLSADGMLTFSGPKVPSGVDAGHSERAIPVSREEKPSSAPSS</sequence>
<dbReference type="PIR" id="A02883">
    <property type="entry name" value="CYSLAA"/>
</dbReference>
<dbReference type="RefSeq" id="XP_035925190.1">
    <property type="nucleotide sequence ID" value="XM_036069297.1"/>
</dbReference>
<dbReference type="SMR" id="P68289"/>
<dbReference type="GlyCosmos" id="P68289">
    <property type="glycosylation" value="1 site, No reported glycans"/>
</dbReference>
<dbReference type="GeneID" id="118520996"/>
<dbReference type="GO" id="GO:0005737">
    <property type="term" value="C:cytoplasm"/>
    <property type="evidence" value="ECO:0000250"/>
    <property type="project" value="UniProtKB"/>
</dbReference>
<dbReference type="GO" id="GO:0005634">
    <property type="term" value="C:nucleus"/>
    <property type="evidence" value="ECO:0000250"/>
    <property type="project" value="UniProtKB"/>
</dbReference>
<dbReference type="GO" id="GO:0046872">
    <property type="term" value="F:metal ion binding"/>
    <property type="evidence" value="ECO:0007669"/>
    <property type="project" value="UniProtKB-KW"/>
</dbReference>
<dbReference type="GO" id="GO:0005212">
    <property type="term" value="F:structural constituent of eye lens"/>
    <property type="evidence" value="ECO:0007669"/>
    <property type="project" value="UniProtKB-KW"/>
</dbReference>
<dbReference type="GO" id="GO:0051082">
    <property type="term" value="F:unfolded protein binding"/>
    <property type="evidence" value="ECO:0007669"/>
    <property type="project" value="TreeGrafter"/>
</dbReference>
<dbReference type="GO" id="GO:0002088">
    <property type="term" value="P:lens development in camera-type eye"/>
    <property type="evidence" value="ECO:0007669"/>
    <property type="project" value="TreeGrafter"/>
</dbReference>
<dbReference type="GO" id="GO:0043066">
    <property type="term" value="P:negative regulation of apoptotic process"/>
    <property type="evidence" value="ECO:0007669"/>
    <property type="project" value="TreeGrafter"/>
</dbReference>
<dbReference type="GO" id="GO:0042026">
    <property type="term" value="P:protein refolding"/>
    <property type="evidence" value="ECO:0007669"/>
    <property type="project" value="TreeGrafter"/>
</dbReference>
<dbReference type="GO" id="GO:0009408">
    <property type="term" value="P:response to heat"/>
    <property type="evidence" value="ECO:0007669"/>
    <property type="project" value="TreeGrafter"/>
</dbReference>
<dbReference type="CDD" id="cd06497">
    <property type="entry name" value="ACD_alphaA-crystallin_HspB4"/>
    <property type="match status" value="1"/>
</dbReference>
<dbReference type="FunFam" id="2.60.40.790:FF:000008">
    <property type="entry name" value="Alpha-crystallin A chain"/>
    <property type="match status" value="1"/>
</dbReference>
<dbReference type="Gene3D" id="2.60.40.790">
    <property type="match status" value="1"/>
</dbReference>
<dbReference type="InterPro" id="IPR002068">
    <property type="entry name" value="A-crystallin/Hsp20_dom"/>
</dbReference>
<dbReference type="InterPro" id="IPR055269">
    <property type="entry name" value="Alpha-crystallin/HSP_16"/>
</dbReference>
<dbReference type="InterPro" id="IPR001436">
    <property type="entry name" value="Alpha-crystallin/sHSP_animal"/>
</dbReference>
<dbReference type="InterPro" id="IPR003090">
    <property type="entry name" value="Alpha-crystallin_N"/>
</dbReference>
<dbReference type="InterPro" id="IPR008978">
    <property type="entry name" value="HSP20-like_chaperone"/>
</dbReference>
<dbReference type="PANTHER" id="PTHR45640:SF14">
    <property type="entry name" value="ALPHA-CRYSTALLIN A CHAIN"/>
    <property type="match status" value="1"/>
</dbReference>
<dbReference type="PANTHER" id="PTHR45640">
    <property type="entry name" value="HEAT SHOCK PROTEIN HSP-12.2-RELATED"/>
    <property type="match status" value="1"/>
</dbReference>
<dbReference type="Pfam" id="PF00525">
    <property type="entry name" value="Crystallin"/>
    <property type="match status" value="1"/>
</dbReference>
<dbReference type="Pfam" id="PF00011">
    <property type="entry name" value="HSP20"/>
    <property type="match status" value="1"/>
</dbReference>
<dbReference type="PIRSF" id="PIRSF036514">
    <property type="entry name" value="Sm_HSP_B1"/>
    <property type="match status" value="1"/>
</dbReference>
<dbReference type="PRINTS" id="PR00299">
    <property type="entry name" value="ACRYSTALLIN"/>
</dbReference>
<dbReference type="SUPFAM" id="SSF49764">
    <property type="entry name" value="HSP20-like chaperones"/>
    <property type="match status" value="1"/>
</dbReference>
<dbReference type="PROSITE" id="PS01031">
    <property type="entry name" value="SHSP"/>
    <property type="match status" value="1"/>
</dbReference>